<protein>
    <recommendedName>
        <fullName>Cysteine proteinase inhibitor 4</fullName>
    </recommendedName>
    <alternativeName>
        <fullName>Oryzacystatin IV</fullName>
        <shortName>OC-IV</shortName>
    </alternativeName>
    <alternativeName>
        <fullName>Oryzacystatin-4</fullName>
    </alternativeName>
</protein>
<organism>
    <name type="scientific">Oryza sativa subsp. japonica</name>
    <name type="common">Rice</name>
    <dbReference type="NCBI Taxonomy" id="39947"/>
    <lineage>
        <taxon>Eukaryota</taxon>
        <taxon>Viridiplantae</taxon>
        <taxon>Streptophyta</taxon>
        <taxon>Embryophyta</taxon>
        <taxon>Tracheophyta</taxon>
        <taxon>Spermatophyta</taxon>
        <taxon>Magnoliopsida</taxon>
        <taxon>Liliopsida</taxon>
        <taxon>Poales</taxon>
        <taxon>Poaceae</taxon>
        <taxon>BOP clade</taxon>
        <taxon>Oryzoideae</taxon>
        <taxon>Oryzeae</taxon>
        <taxon>Oryzinae</taxon>
        <taxon>Oryza</taxon>
        <taxon>Oryza sativa</taxon>
    </lineage>
</organism>
<comment type="function">
    <text evidence="1">Specific inhibitor of cysteine proteinases. Probably involved in the regulation of endogenous processes and in defense against pests and pathogens (By similarity).</text>
</comment>
<comment type="subcellular location">
    <subcellularLocation>
        <location evidence="4">Secreted</location>
    </subcellularLocation>
</comment>
<comment type="similarity">
    <text evidence="4">Belongs to the cystatin family. Phytocystatin subfamily.</text>
</comment>
<feature type="signal peptide" evidence="2">
    <location>
        <begin position="1"/>
        <end position="24"/>
    </location>
</feature>
<feature type="chain" id="PRO_0000277501" description="Cysteine proteinase inhibitor 4">
    <location>
        <begin position="25"/>
        <end position="158"/>
    </location>
</feature>
<feature type="domain" description="Cystatin">
    <location>
        <begin position="51"/>
        <end position="116"/>
    </location>
</feature>
<feature type="region of interest" description="Disordered" evidence="3">
    <location>
        <begin position="26"/>
        <end position="51"/>
    </location>
</feature>
<feature type="short sequence motif" description="Secondary area of contact" evidence="1">
    <location>
        <begin position="101"/>
        <end position="105"/>
    </location>
</feature>
<feature type="compositionally biased region" description="Gly residues" evidence="3">
    <location>
        <begin position="29"/>
        <end position="49"/>
    </location>
</feature>
<feature type="site" description="Reactive site" evidence="1">
    <location>
        <position position="51"/>
    </location>
</feature>
<sequence>MAARCPVGVASVLLLIVLVTVASAASGARSGGGGGGGIRELRGGGAGRRVGGRTEVRDVEGDREVQELGRFSVEEHNRRRRSRDCGDVRLEFGRVVAAQRQVVSGLKYYLRVAAAEEGAAGQNGGEPRVFDAVVVVKPWLESRTLLTFAPAADSPNES</sequence>
<gene>
    <name type="ordered locus">Os01g0915200</name>
    <name type="ordered locus">LOC_Os01g68660</name>
    <name evidence="5" type="ORF">OsJ_04530</name>
    <name type="ORF">P0004D12.18</name>
</gene>
<reference key="1">
    <citation type="journal article" date="2002" name="Nature">
        <title>The genome sequence and structure of rice chromosome 1.</title>
        <authorList>
            <person name="Sasaki T."/>
            <person name="Matsumoto T."/>
            <person name="Yamamoto K."/>
            <person name="Sakata K."/>
            <person name="Baba T."/>
            <person name="Katayose Y."/>
            <person name="Wu J."/>
            <person name="Niimura Y."/>
            <person name="Cheng Z."/>
            <person name="Nagamura Y."/>
            <person name="Antonio B.A."/>
            <person name="Kanamori H."/>
            <person name="Hosokawa S."/>
            <person name="Masukawa M."/>
            <person name="Arikawa K."/>
            <person name="Chiden Y."/>
            <person name="Hayashi M."/>
            <person name="Okamoto M."/>
            <person name="Ando T."/>
            <person name="Aoki H."/>
            <person name="Arita K."/>
            <person name="Hamada M."/>
            <person name="Harada C."/>
            <person name="Hijishita S."/>
            <person name="Honda M."/>
            <person name="Ichikawa Y."/>
            <person name="Idonuma A."/>
            <person name="Iijima M."/>
            <person name="Ikeda M."/>
            <person name="Ikeno M."/>
            <person name="Ito S."/>
            <person name="Ito T."/>
            <person name="Ito Y."/>
            <person name="Ito Y."/>
            <person name="Iwabuchi A."/>
            <person name="Kamiya K."/>
            <person name="Karasawa W."/>
            <person name="Katagiri S."/>
            <person name="Kikuta A."/>
            <person name="Kobayashi N."/>
            <person name="Kono I."/>
            <person name="Machita K."/>
            <person name="Maehara T."/>
            <person name="Mizuno H."/>
            <person name="Mizubayashi T."/>
            <person name="Mukai Y."/>
            <person name="Nagasaki H."/>
            <person name="Nakashima M."/>
            <person name="Nakama Y."/>
            <person name="Nakamichi Y."/>
            <person name="Nakamura M."/>
            <person name="Namiki N."/>
            <person name="Negishi M."/>
            <person name="Ohta I."/>
            <person name="Ono N."/>
            <person name="Saji S."/>
            <person name="Sakai K."/>
            <person name="Shibata M."/>
            <person name="Shimokawa T."/>
            <person name="Shomura A."/>
            <person name="Song J."/>
            <person name="Takazaki Y."/>
            <person name="Terasawa K."/>
            <person name="Tsuji K."/>
            <person name="Waki K."/>
            <person name="Yamagata H."/>
            <person name="Yamane H."/>
            <person name="Yoshiki S."/>
            <person name="Yoshihara R."/>
            <person name="Yukawa K."/>
            <person name="Zhong H."/>
            <person name="Iwama H."/>
            <person name="Endo T."/>
            <person name="Ito H."/>
            <person name="Hahn J.H."/>
            <person name="Kim H.-I."/>
            <person name="Eun M.-Y."/>
            <person name="Yano M."/>
            <person name="Jiang J."/>
            <person name="Gojobori T."/>
        </authorList>
    </citation>
    <scope>NUCLEOTIDE SEQUENCE [LARGE SCALE GENOMIC DNA]</scope>
    <source>
        <strain>cv. Nipponbare</strain>
    </source>
</reference>
<reference key="2">
    <citation type="journal article" date="2005" name="Nature">
        <title>The map-based sequence of the rice genome.</title>
        <authorList>
            <consortium name="International rice genome sequencing project (IRGSP)"/>
        </authorList>
    </citation>
    <scope>NUCLEOTIDE SEQUENCE [LARGE SCALE GENOMIC DNA]</scope>
    <source>
        <strain>cv. Nipponbare</strain>
    </source>
</reference>
<reference key="3">
    <citation type="journal article" date="2008" name="Nucleic Acids Res.">
        <title>The rice annotation project database (RAP-DB): 2008 update.</title>
        <authorList>
            <consortium name="The rice annotation project (RAP)"/>
        </authorList>
    </citation>
    <scope>GENOME REANNOTATION</scope>
    <source>
        <strain>cv. Nipponbare</strain>
    </source>
</reference>
<reference key="4">
    <citation type="journal article" date="2013" name="Rice">
        <title>Improvement of the Oryza sativa Nipponbare reference genome using next generation sequence and optical map data.</title>
        <authorList>
            <person name="Kawahara Y."/>
            <person name="de la Bastide M."/>
            <person name="Hamilton J.P."/>
            <person name="Kanamori H."/>
            <person name="McCombie W.R."/>
            <person name="Ouyang S."/>
            <person name="Schwartz D.C."/>
            <person name="Tanaka T."/>
            <person name="Wu J."/>
            <person name="Zhou S."/>
            <person name="Childs K.L."/>
            <person name="Davidson R.M."/>
            <person name="Lin H."/>
            <person name="Quesada-Ocampo L."/>
            <person name="Vaillancourt B."/>
            <person name="Sakai H."/>
            <person name="Lee S.S."/>
            <person name="Kim J."/>
            <person name="Numa H."/>
            <person name="Itoh T."/>
            <person name="Buell C.R."/>
            <person name="Matsumoto T."/>
        </authorList>
    </citation>
    <scope>GENOME REANNOTATION</scope>
    <source>
        <strain>cv. Nipponbare</strain>
    </source>
</reference>
<reference key="5">
    <citation type="journal article" date="2005" name="PLoS Biol.">
        <title>The genomes of Oryza sativa: a history of duplications.</title>
        <authorList>
            <person name="Yu J."/>
            <person name="Wang J."/>
            <person name="Lin W."/>
            <person name="Li S."/>
            <person name="Li H."/>
            <person name="Zhou J."/>
            <person name="Ni P."/>
            <person name="Dong W."/>
            <person name="Hu S."/>
            <person name="Zeng C."/>
            <person name="Zhang J."/>
            <person name="Zhang Y."/>
            <person name="Li R."/>
            <person name="Xu Z."/>
            <person name="Li S."/>
            <person name="Li X."/>
            <person name="Zheng H."/>
            <person name="Cong L."/>
            <person name="Lin L."/>
            <person name="Yin J."/>
            <person name="Geng J."/>
            <person name="Li G."/>
            <person name="Shi J."/>
            <person name="Liu J."/>
            <person name="Lv H."/>
            <person name="Li J."/>
            <person name="Wang J."/>
            <person name="Deng Y."/>
            <person name="Ran L."/>
            <person name="Shi X."/>
            <person name="Wang X."/>
            <person name="Wu Q."/>
            <person name="Li C."/>
            <person name="Ren X."/>
            <person name="Wang J."/>
            <person name="Wang X."/>
            <person name="Li D."/>
            <person name="Liu D."/>
            <person name="Zhang X."/>
            <person name="Ji Z."/>
            <person name="Zhao W."/>
            <person name="Sun Y."/>
            <person name="Zhang Z."/>
            <person name="Bao J."/>
            <person name="Han Y."/>
            <person name="Dong L."/>
            <person name="Ji J."/>
            <person name="Chen P."/>
            <person name="Wu S."/>
            <person name="Liu J."/>
            <person name="Xiao Y."/>
            <person name="Bu D."/>
            <person name="Tan J."/>
            <person name="Yang L."/>
            <person name="Ye C."/>
            <person name="Zhang J."/>
            <person name="Xu J."/>
            <person name="Zhou Y."/>
            <person name="Yu Y."/>
            <person name="Zhang B."/>
            <person name="Zhuang S."/>
            <person name="Wei H."/>
            <person name="Liu B."/>
            <person name="Lei M."/>
            <person name="Yu H."/>
            <person name="Li Y."/>
            <person name="Xu H."/>
            <person name="Wei S."/>
            <person name="He X."/>
            <person name="Fang L."/>
            <person name="Zhang Z."/>
            <person name="Zhang Y."/>
            <person name="Huang X."/>
            <person name="Su Z."/>
            <person name="Tong W."/>
            <person name="Li J."/>
            <person name="Tong Z."/>
            <person name="Li S."/>
            <person name="Ye J."/>
            <person name="Wang L."/>
            <person name="Fang L."/>
            <person name="Lei T."/>
            <person name="Chen C.-S."/>
            <person name="Chen H.-C."/>
            <person name="Xu Z."/>
            <person name="Li H."/>
            <person name="Huang H."/>
            <person name="Zhang F."/>
            <person name="Xu H."/>
            <person name="Li N."/>
            <person name="Zhao C."/>
            <person name="Li S."/>
            <person name="Dong L."/>
            <person name="Huang Y."/>
            <person name="Li L."/>
            <person name="Xi Y."/>
            <person name="Qi Q."/>
            <person name="Li W."/>
            <person name="Zhang B."/>
            <person name="Hu W."/>
            <person name="Zhang Y."/>
            <person name="Tian X."/>
            <person name="Jiao Y."/>
            <person name="Liang X."/>
            <person name="Jin J."/>
            <person name="Gao L."/>
            <person name="Zheng W."/>
            <person name="Hao B."/>
            <person name="Liu S.-M."/>
            <person name="Wang W."/>
            <person name="Yuan L."/>
            <person name="Cao M."/>
            <person name="McDermott J."/>
            <person name="Samudrala R."/>
            <person name="Wang J."/>
            <person name="Wong G.K.-S."/>
            <person name="Yang H."/>
        </authorList>
    </citation>
    <scope>NUCLEOTIDE SEQUENCE [LARGE SCALE GENOMIC DNA]</scope>
    <source>
        <strain>cv. Nipponbare</strain>
    </source>
</reference>
<reference key="6">
    <citation type="journal article" date="2003" name="Science">
        <title>Collection, mapping, and annotation of over 28,000 cDNA clones from japonica rice.</title>
        <authorList>
            <consortium name="The rice full-length cDNA consortium"/>
        </authorList>
    </citation>
    <scope>NUCLEOTIDE SEQUENCE [LARGE SCALE MRNA]</scope>
    <source>
        <strain>cv. Nipponbare</strain>
    </source>
</reference>
<reference key="7">
    <citation type="journal article" date="2005" name="Mol. Genet. Genomics">
        <title>Comparative phylogenetic analysis of cystatin gene families from arabidopsis, rice and barley.</title>
        <authorList>
            <person name="Martinez M."/>
            <person name="Abraham Z."/>
            <person name="Carbonero P."/>
            <person name="Diaz I."/>
        </authorList>
    </citation>
    <scope>GENE FAMILY</scope>
</reference>
<proteinExistence type="evidence at transcript level"/>
<keyword id="KW-0611">Plant defense</keyword>
<keyword id="KW-0646">Protease inhibitor</keyword>
<keyword id="KW-1185">Reference proteome</keyword>
<keyword id="KW-0964">Secreted</keyword>
<keyword id="KW-0732">Signal</keyword>
<keyword id="KW-0789">Thiol protease inhibitor</keyword>
<dbReference type="EMBL" id="AP003433">
    <property type="protein sequence ID" value="BAD82395.1"/>
    <property type="molecule type" value="Genomic_DNA"/>
</dbReference>
<dbReference type="EMBL" id="AP008207">
    <property type="protein sequence ID" value="BAF07099.1"/>
    <property type="molecule type" value="Genomic_DNA"/>
</dbReference>
<dbReference type="EMBL" id="AP014957">
    <property type="protein sequence ID" value="BAS75871.1"/>
    <property type="molecule type" value="Genomic_DNA"/>
</dbReference>
<dbReference type="EMBL" id="CM000138">
    <property type="protein sequence ID" value="EAZ14605.1"/>
    <property type="molecule type" value="Genomic_DNA"/>
</dbReference>
<dbReference type="EMBL" id="AK121863">
    <property type="protein sequence ID" value="BAH00694.1"/>
    <property type="molecule type" value="mRNA"/>
</dbReference>
<dbReference type="RefSeq" id="XP_015643828.1">
    <property type="nucleotide sequence ID" value="XM_015788342.1"/>
</dbReference>
<dbReference type="SMR" id="Q5N806"/>
<dbReference type="FunCoup" id="Q5N806">
    <property type="interactions" value="131"/>
</dbReference>
<dbReference type="STRING" id="39947.Q5N806"/>
<dbReference type="MEROPS" id="I25.054"/>
<dbReference type="PaxDb" id="39947-Q5N806"/>
<dbReference type="EnsemblPlants" id="Os01t0915200-01">
    <property type="protein sequence ID" value="Os01t0915200-01"/>
    <property type="gene ID" value="Os01g0915200"/>
</dbReference>
<dbReference type="Gramene" id="Os01t0915200-01">
    <property type="protein sequence ID" value="Os01t0915200-01"/>
    <property type="gene ID" value="Os01g0915200"/>
</dbReference>
<dbReference type="KEGG" id="dosa:Os01g0915200"/>
<dbReference type="eggNOG" id="ENOG502S4YZ">
    <property type="taxonomic scope" value="Eukaryota"/>
</dbReference>
<dbReference type="HOGENOM" id="CLU_113093_0_1_1"/>
<dbReference type="InParanoid" id="Q5N806"/>
<dbReference type="OMA" id="HRGIHKM"/>
<dbReference type="OrthoDB" id="1908104at2759"/>
<dbReference type="Proteomes" id="UP000000763">
    <property type="component" value="Chromosome 1"/>
</dbReference>
<dbReference type="Proteomes" id="UP000007752">
    <property type="component" value="Chromosome 1"/>
</dbReference>
<dbReference type="Proteomes" id="UP000059680">
    <property type="component" value="Chromosome 1"/>
</dbReference>
<dbReference type="GO" id="GO:0005576">
    <property type="term" value="C:extracellular region"/>
    <property type="evidence" value="ECO:0007669"/>
    <property type="project" value="UniProtKB-SubCell"/>
</dbReference>
<dbReference type="GO" id="GO:0004869">
    <property type="term" value="F:cysteine-type endopeptidase inhibitor activity"/>
    <property type="evidence" value="ECO:0007669"/>
    <property type="project" value="UniProtKB-KW"/>
</dbReference>
<dbReference type="GO" id="GO:0006952">
    <property type="term" value="P:defense response"/>
    <property type="evidence" value="ECO:0007669"/>
    <property type="project" value="UniProtKB-KW"/>
</dbReference>
<dbReference type="CDD" id="cd00042">
    <property type="entry name" value="CY"/>
    <property type="match status" value="1"/>
</dbReference>
<dbReference type="Gene3D" id="3.10.450.10">
    <property type="match status" value="1"/>
</dbReference>
<dbReference type="InterPro" id="IPR000010">
    <property type="entry name" value="Cystatin_dom"/>
</dbReference>
<dbReference type="InterPro" id="IPR046350">
    <property type="entry name" value="Cystatin_sf"/>
</dbReference>
<dbReference type="PANTHER" id="PTHR47373">
    <property type="entry name" value="CYSTEINE PROTEINASE INHIBITOR 2"/>
    <property type="match status" value="1"/>
</dbReference>
<dbReference type="PANTHER" id="PTHR47373:SF1">
    <property type="entry name" value="CYSTEINE PROTEINASE INHIBITOR 2"/>
    <property type="match status" value="1"/>
</dbReference>
<dbReference type="Pfam" id="PF16845">
    <property type="entry name" value="SQAPI"/>
    <property type="match status" value="1"/>
</dbReference>
<dbReference type="SMART" id="SM00043">
    <property type="entry name" value="CY"/>
    <property type="match status" value="1"/>
</dbReference>
<dbReference type="SUPFAM" id="SSF54403">
    <property type="entry name" value="Cystatin/monellin"/>
    <property type="match status" value="1"/>
</dbReference>
<accession>Q5N806</accession>
<accession>A3A0V8</accession>
<name>CYT4_ORYSJ</name>
<evidence type="ECO:0000250" key="1"/>
<evidence type="ECO:0000255" key="2"/>
<evidence type="ECO:0000256" key="3">
    <source>
        <dbReference type="SAM" id="MobiDB-lite"/>
    </source>
</evidence>
<evidence type="ECO:0000305" key="4"/>
<evidence type="ECO:0000312" key="5">
    <source>
        <dbReference type="EMBL" id="EAZ14605.1"/>
    </source>
</evidence>